<accession>Q920B6</accession>
<accession>A3QR52</accession>
<accession>Q3MMY3</accession>
<accession>Q5DNW4</accession>
<accession>Q5DNW5</accession>
<reference evidence="15 17" key="1">
    <citation type="journal article" date="2001" name="Nat. Neurosci.">
        <title>KCNK2: reversible conversion of a hippocampal potassium leak into a voltage-dependent channel.</title>
        <authorList>
            <person name="Bockenhauer D."/>
            <person name="Zilberberg N."/>
            <person name="Goldstein S.A."/>
        </authorList>
    </citation>
    <scope>NUCLEOTIDE SEQUENCE [MRNA] (ISOFORM 1)</scope>
    <scope>FUNCTION</scope>
    <source>
        <tissue evidence="17">Brain</tissue>
    </source>
</reference>
<reference evidence="15 18" key="2">
    <citation type="journal article" date="2002" name="J. Physiol. (Lond.)">
        <title>Expression pattern and functional characteristics of two novel splice variants of the two-pore-domain potassium channel TREK-2.</title>
        <authorList>
            <person name="Gu W."/>
            <person name="Schlichthorl G."/>
            <person name="Hirsch J.R."/>
            <person name="Engels H."/>
            <person name="Karschin C."/>
            <person name="Karschin A."/>
            <person name="Derst C."/>
            <person name="Steinlein O.K."/>
            <person name="Daut J."/>
        </authorList>
    </citation>
    <scope>NUCLEOTIDE SEQUENCE [MRNA] (ISOFORM 1)</scope>
    <scope>TISSUE SPECIFICITY</scope>
    <source>
        <strain evidence="18">Wistar</strain>
    </source>
</reference>
<reference evidence="15 20" key="3">
    <citation type="journal article" date="2006" name="Cardiovasc. Res.">
        <title>The stretch-activated potassium channel TREK-1 in rat cardiac ventricular muscle.</title>
        <authorList>
            <person name="Tao Li X."/>
            <person name="Dyachenko V."/>
            <person name="Zuzarte M."/>
            <person name="Putzke C."/>
            <person name="Preisig-Muller R."/>
            <person name="Isenberg G."/>
            <person name="Daut J."/>
        </authorList>
    </citation>
    <scope>NUCLEOTIDE SEQUENCE [MRNA] (ISOFORM 2)</scope>
    <scope>FUNCTION</scope>
    <scope>TRANSPORTER ACTIVITY</scope>
    <scope>ACTIVITY REGULATION</scope>
    <scope>SUBCELLULAR LOCATION</scope>
    <scope>TISSUE SPECIFICITY</scope>
</reference>
<reference evidence="15 21" key="4">
    <citation type="journal article" date="2014" name="Pflugers Arch.">
        <title>A splice variant of the two-pore domain potassium channel TREK-1 with only one pore domain reduces the surface expression of full-length TREK-1 channels.</title>
        <authorList>
            <person name="Rinne S."/>
            <person name="Renigunta V."/>
            <person name="Schlichthorl G."/>
            <person name="Zuzarte M."/>
            <person name="Bittner S."/>
            <person name="Meuth S.G."/>
            <person name="Decher N."/>
            <person name="Daut J."/>
            <person name="Preisig-Muller R."/>
        </authorList>
    </citation>
    <scope>NUCLEOTIDE SEQUENCE [MRNA] (ISOFORMS 3; 4 AND 5)</scope>
    <scope>FUNCTION</scope>
    <scope>TRANSPORTER ACTIVITY</scope>
    <scope>SUBCELLULAR LOCATION (ISOFORMS 1; 2 AND 5)</scope>
    <scope>TISSUE SPECIFICITY</scope>
    <scope>DOMAIN (ISOFORM 5)</scope>
</reference>
<reference evidence="15 19" key="5">
    <citation type="submission" date="2004-07" db="EMBL/GenBank/DDBJ databases">
        <title>Possible role of TREK-1 in temperature regulation.</title>
        <authorList>
            <person name="Li Z.B."/>
            <person name="Wang X.L."/>
        </authorList>
    </citation>
    <scope>NUCLEOTIDE SEQUENCE [MRNA] (ISOFORM 1)</scope>
    <source>
        <strain evidence="19">Wistar</strain>
    </source>
</reference>
<reference key="6">
    <citation type="journal article" date="2004" name="Nature">
        <title>Genome sequence of the Brown Norway rat yields insights into mammalian evolution.</title>
        <authorList>
            <person name="Gibbs R.A."/>
            <person name="Weinstock G.M."/>
            <person name="Metzker M.L."/>
            <person name="Muzny D.M."/>
            <person name="Sodergren E.J."/>
            <person name="Scherer S."/>
            <person name="Scott G."/>
            <person name="Steffen D."/>
            <person name="Worley K.C."/>
            <person name="Burch P.E."/>
            <person name="Okwuonu G."/>
            <person name="Hines S."/>
            <person name="Lewis L."/>
            <person name="Deramo C."/>
            <person name="Delgado O."/>
            <person name="Dugan-Rocha S."/>
            <person name="Miner G."/>
            <person name="Morgan M."/>
            <person name="Hawes A."/>
            <person name="Gill R."/>
            <person name="Holt R.A."/>
            <person name="Adams M.D."/>
            <person name="Amanatides P.G."/>
            <person name="Baden-Tillson H."/>
            <person name="Barnstead M."/>
            <person name="Chin S."/>
            <person name="Evans C.A."/>
            <person name="Ferriera S."/>
            <person name="Fosler C."/>
            <person name="Glodek A."/>
            <person name="Gu Z."/>
            <person name="Jennings D."/>
            <person name="Kraft C.L."/>
            <person name="Nguyen T."/>
            <person name="Pfannkoch C.M."/>
            <person name="Sitter C."/>
            <person name="Sutton G.G."/>
            <person name="Venter J.C."/>
            <person name="Woodage T."/>
            <person name="Smith D."/>
            <person name="Lee H.-M."/>
            <person name="Gustafson E."/>
            <person name="Cahill P."/>
            <person name="Kana A."/>
            <person name="Doucette-Stamm L."/>
            <person name="Weinstock K."/>
            <person name="Fechtel K."/>
            <person name="Weiss R.B."/>
            <person name="Dunn D.M."/>
            <person name="Green E.D."/>
            <person name="Blakesley R.W."/>
            <person name="Bouffard G.G."/>
            <person name="De Jong P.J."/>
            <person name="Osoegawa K."/>
            <person name="Zhu B."/>
            <person name="Marra M."/>
            <person name="Schein J."/>
            <person name="Bosdet I."/>
            <person name="Fjell C."/>
            <person name="Jones S."/>
            <person name="Krzywinski M."/>
            <person name="Mathewson C."/>
            <person name="Siddiqui A."/>
            <person name="Wye N."/>
            <person name="McPherson J."/>
            <person name="Zhao S."/>
            <person name="Fraser C.M."/>
            <person name="Shetty J."/>
            <person name="Shatsman S."/>
            <person name="Geer K."/>
            <person name="Chen Y."/>
            <person name="Abramzon S."/>
            <person name="Nierman W.C."/>
            <person name="Havlak P.H."/>
            <person name="Chen R."/>
            <person name="Durbin K.J."/>
            <person name="Egan A."/>
            <person name="Ren Y."/>
            <person name="Song X.-Z."/>
            <person name="Li B."/>
            <person name="Liu Y."/>
            <person name="Qin X."/>
            <person name="Cawley S."/>
            <person name="Cooney A.J."/>
            <person name="D'Souza L.M."/>
            <person name="Martin K."/>
            <person name="Wu J.Q."/>
            <person name="Gonzalez-Garay M.L."/>
            <person name="Jackson A.R."/>
            <person name="Kalafus K.J."/>
            <person name="McLeod M.P."/>
            <person name="Milosavljevic A."/>
            <person name="Virk D."/>
            <person name="Volkov A."/>
            <person name="Wheeler D.A."/>
            <person name="Zhang Z."/>
            <person name="Bailey J.A."/>
            <person name="Eichler E.E."/>
            <person name="Tuzun E."/>
            <person name="Birney E."/>
            <person name="Mongin E."/>
            <person name="Ureta-Vidal A."/>
            <person name="Woodwark C."/>
            <person name="Zdobnov E."/>
            <person name="Bork P."/>
            <person name="Suyama M."/>
            <person name="Torrents D."/>
            <person name="Alexandersson M."/>
            <person name="Trask B.J."/>
            <person name="Young J.M."/>
            <person name="Huang H."/>
            <person name="Wang H."/>
            <person name="Xing H."/>
            <person name="Daniels S."/>
            <person name="Gietzen D."/>
            <person name="Schmidt J."/>
            <person name="Stevens K."/>
            <person name="Vitt U."/>
            <person name="Wingrove J."/>
            <person name="Camara F."/>
            <person name="Mar Alba M."/>
            <person name="Abril J.F."/>
            <person name="Guigo R."/>
            <person name="Smit A."/>
            <person name="Dubchak I."/>
            <person name="Rubin E.M."/>
            <person name="Couronne O."/>
            <person name="Poliakov A."/>
            <person name="Huebner N."/>
            <person name="Ganten D."/>
            <person name="Goesele C."/>
            <person name="Hummel O."/>
            <person name="Kreitler T."/>
            <person name="Lee Y.-A."/>
            <person name="Monti J."/>
            <person name="Schulz H."/>
            <person name="Zimdahl H."/>
            <person name="Himmelbauer H."/>
            <person name="Lehrach H."/>
            <person name="Jacob H.J."/>
            <person name="Bromberg S."/>
            <person name="Gullings-Handley J."/>
            <person name="Jensen-Seaman M.I."/>
            <person name="Kwitek A.E."/>
            <person name="Lazar J."/>
            <person name="Pasko D."/>
            <person name="Tonellato P.J."/>
            <person name="Twigger S."/>
            <person name="Ponting C.P."/>
            <person name="Duarte J.M."/>
            <person name="Rice S."/>
            <person name="Goodstadt L."/>
            <person name="Beatson S.A."/>
            <person name="Emes R.D."/>
            <person name="Winter E.E."/>
            <person name="Webber C."/>
            <person name="Brandt P."/>
            <person name="Nyakatura G."/>
            <person name="Adetobi M."/>
            <person name="Chiaromonte F."/>
            <person name="Elnitski L."/>
            <person name="Eswara P."/>
            <person name="Hardison R.C."/>
            <person name="Hou M."/>
            <person name="Kolbe D."/>
            <person name="Makova K."/>
            <person name="Miller W."/>
            <person name="Nekrutenko A."/>
            <person name="Riemer C."/>
            <person name="Schwartz S."/>
            <person name="Taylor J."/>
            <person name="Yang S."/>
            <person name="Zhang Y."/>
            <person name="Lindpaintner K."/>
            <person name="Andrews T.D."/>
            <person name="Caccamo M."/>
            <person name="Clamp M."/>
            <person name="Clarke L."/>
            <person name="Curwen V."/>
            <person name="Durbin R.M."/>
            <person name="Eyras E."/>
            <person name="Searle S.M."/>
            <person name="Cooper G.M."/>
            <person name="Batzoglou S."/>
            <person name="Brudno M."/>
            <person name="Sidow A."/>
            <person name="Stone E.A."/>
            <person name="Payseur B.A."/>
            <person name="Bourque G."/>
            <person name="Lopez-Otin C."/>
            <person name="Puente X.S."/>
            <person name="Chakrabarti K."/>
            <person name="Chatterji S."/>
            <person name="Dewey C."/>
            <person name="Pachter L."/>
            <person name="Bray N."/>
            <person name="Yap V.B."/>
            <person name="Caspi A."/>
            <person name="Tesler G."/>
            <person name="Pevzner P.A."/>
            <person name="Haussler D."/>
            <person name="Roskin K.M."/>
            <person name="Baertsch R."/>
            <person name="Clawson H."/>
            <person name="Furey T.S."/>
            <person name="Hinrichs A.S."/>
            <person name="Karolchik D."/>
            <person name="Kent W.J."/>
            <person name="Rosenbloom K.R."/>
            <person name="Trumbower H."/>
            <person name="Weirauch M."/>
            <person name="Cooper D.N."/>
            <person name="Stenson P.D."/>
            <person name="Ma B."/>
            <person name="Brent M."/>
            <person name="Arumugam M."/>
            <person name="Shteynberg D."/>
            <person name="Copley R.R."/>
            <person name="Taylor M.S."/>
            <person name="Riethman H."/>
            <person name="Mudunuri U."/>
            <person name="Peterson J."/>
            <person name="Guyer M."/>
            <person name="Felsenfeld A."/>
            <person name="Old S."/>
            <person name="Mockrin S."/>
            <person name="Collins F.S."/>
        </authorList>
    </citation>
    <scope>NUCLEOTIDE SEQUENCE [LARGE SCALE GENOMIC DNA]</scope>
    <source>
        <strain>Brown Norway</strain>
    </source>
</reference>
<reference evidence="15 19" key="7">
    <citation type="submission" date="2005-07" db="EMBL/GenBank/DDBJ databases">
        <authorList>
            <person name="Mural R.J."/>
            <person name="Adams M.D."/>
            <person name="Myers E.W."/>
            <person name="Smith H.O."/>
            <person name="Venter J.C."/>
        </authorList>
    </citation>
    <scope>NUCLEOTIDE SEQUENCE [LARGE SCALE GENOMIC DNA]</scope>
</reference>
<reference key="8">
    <citation type="journal article" date="2009" name="J. Neurosci.">
        <title>TWIK-1 and TREK-1 are potassium channels contributing significantly to astrocyte passive conductance in rat hippocampal slices.</title>
        <authorList>
            <person name="Zhou M."/>
            <person name="Xu G."/>
            <person name="Xie M."/>
            <person name="Zhang X."/>
            <person name="Schools G.P."/>
            <person name="Ma L."/>
            <person name="Kimelberg H.K."/>
            <person name="Chen H."/>
        </authorList>
    </citation>
    <scope>FUNCTION</scope>
    <scope>TRANSPORTER ACTIVITY</scope>
    <scope>TISSUE SPECIFICITY</scope>
</reference>
<reference key="9">
    <citation type="journal article" date="2012" name="Cell">
        <title>TREK-1 and Best1 channels mediate fast and slow glutamate release in astrocytes upon GPCR activation.</title>
        <authorList>
            <person name="Woo D.H."/>
            <person name="Han K.S."/>
            <person name="Shim J.W."/>
            <person name="Yoon B.E."/>
            <person name="Kim E."/>
            <person name="Bae J.Y."/>
            <person name="Oh S.J."/>
            <person name="Hwang E.M."/>
            <person name="Marmorstein A.D."/>
            <person name="Bae Y.C."/>
            <person name="Park J.Y."/>
            <person name="Lee C.J."/>
        </authorList>
    </citation>
    <scope>FUNCTION</scope>
    <scope>TRANSPORTER ACTIVITY</scope>
    <scope>INTERACTION WITH GNG4</scope>
    <scope>REGION</scope>
    <scope>MUTAGENESIS OF GLY-144 (ISOFORM 2)</scope>
</reference>
<reference key="10">
    <citation type="journal article" date="2016" name="Cell">
        <title>A Non-canonical Voltage-Sensing Mechanism Controls Gating in K2P K(+) Channels.</title>
        <authorList>
            <person name="Schewe M."/>
            <person name="Nematian-Ardestani E."/>
            <person name="Sun H."/>
            <person name="Musinszki M."/>
            <person name="Cordeiro S."/>
            <person name="Bucci G."/>
            <person name="de Groot B.L."/>
            <person name="Tucker S.J."/>
            <person name="Rapedius M."/>
            <person name="Baukrowitz T."/>
        </authorList>
    </citation>
    <scope>FUNCTION</scope>
    <scope>TRANSPORTER ACTIVITY</scope>
    <scope>REACTION MECHANISM</scope>
    <scope>ACTIVITY REGULATION</scope>
    <scope>REGION</scope>
    <scope>MUTAGENESIS OF ILE-155; THR-156; THR-157; ILE-158; ASN-162; ILE-163; THR-265; THR-266 AND ILE-267</scope>
</reference>
<reference key="11">
    <citation type="journal article" date="2019" name="Neuron">
        <title>TREK-1 and TRAAK Are Principal K+ Channels at the Nodes of Ranvier for Rapid Action Potential Conduction on Mammalian Myelinated Afferent Nerves.</title>
        <authorList>
            <person name="Kanda H."/>
            <person name="Ling J."/>
            <person name="Tonomura S."/>
            <person name="Noguchi K."/>
            <person name="Matalon S."/>
            <person name="Gu J.G."/>
        </authorList>
    </citation>
    <scope>FUNCTION</scope>
    <scope>TRANSPORTER ACTIVITY</scope>
    <scope>SUBCELLULAR LOCATION</scope>
</reference>
<organism>
    <name type="scientific">Rattus norvegicus</name>
    <name type="common">Rat</name>
    <dbReference type="NCBI Taxonomy" id="10116"/>
    <lineage>
        <taxon>Eukaryota</taxon>
        <taxon>Metazoa</taxon>
        <taxon>Chordata</taxon>
        <taxon>Craniata</taxon>
        <taxon>Vertebrata</taxon>
        <taxon>Euteleostomi</taxon>
        <taxon>Mammalia</taxon>
        <taxon>Eutheria</taxon>
        <taxon>Euarchontoglires</taxon>
        <taxon>Glires</taxon>
        <taxon>Rodentia</taxon>
        <taxon>Myomorpha</taxon>
        <taxon>Muroidea</taxon>
        <taxon>Muridae</taxon>
        <taxon>Murinae</taxon>
        <taxon>Rattus</taxon>
    </lineage>
</organism>
<gene>
    <name evidence="19 22" type="primary">Kcnk2</name>
    <name evidence="21" type="synonym">Trek</name>
</gene>
<sequence>MLASASRERPGYTAGVAAPDLLDPKSAAQNSKPRLSFSAKPTVLASRVESDSAINVMKWKTVSTIFLVVVLYLIIGATVFKALEQPQEISQRTTIVIQKQNFIAQHACVNSTELDELIQQIVTAINAGIIPLGNNSNQVSHWDLGSSFFFAGTVITTIGFGNISPRTEGGKIFCIIYALLGIPLFGFLLAGVGDQLGTIFGKGIAKVEDTFIKWNVSQTKIRIISTIIFILFGCVLFVALPAVIFKHIEGWSALDAIYFVVITLTTIGFGDYVAGGSDIEYLDFYKPVVWFWILVGLAYFAAVLSMIGDWLRVISKKTKEEVGEFRAHAAEWTANVTAEFKETRRRLSVEIYDKFQRATSVKRKLSAELAGNHNQELTPCRRTLSVNHLTSEREVLPPLLKAESIYLNGLTPHCAAEDIAVIENMK</sequence>
<keyword id="KW-0025">Alternative splicing</keyword>
<keyword id="KW-1003">Cell membrane</keyword>
<keyword id="KW-0966">Cell projection</keyword>
<keyword id="KW-1015">Disulfide bond</keyword>
<keyword id="KW-0256">Endoplasmic reticulum</keyword>
<keyword id="KW-0325">Glycoprotein</keyword>
<keyword id="KW-0407">Ion channel</keyword>
<keyword id="KW-0406">Ion transport</keyword>
<keyword id="KW-0472">Membrane</keyword>
<keyword id="KW-0479">Metal-binding</keyword>
<keyword id="KW-0532">Neurotransmitter transport</keyword>
<keyword id="KW-0597">Phosphoprotein</keyword>
<keyword id="KW-0628">Postsynaptic cell membrane</keyword>
<keyword id="KW-0630">Potassium</keyword>
<keyword id="KW-1185">Reference proteome</keyword>
<keyword id="KW-0770">Synapse</keyword>
<keyword id="KW-0812">Transmembrane</keyword>
<keyword id="KW-1133">Transmembrane helix</keyword>
<keyword id="KW-0813">Transport</keyword>
<comment type="function">
    <text evidence="3 5 7 8 9 10 11 12">K(+) channel that conducts voltage-dependent outward rectifying currents upon membrane depolarization. Voltage sensing is coupled to K(+) electrochemical gradient in an 'ion flux gating' mode where outward but not inward ion flow opens the gate. Converts to voltage-independent 'leak' conductance mode upon stimulation by various stimuli including mechanical membrane stretch, acidic pH, heat and lipids. Reversibly converts between a voltage-insensitive K(+) 'leak' channel and a voltage-dependent outward rectifying K(+) channel in a phosphorylation-dependent manner (PubMed:11319556, PubMed:16248991, PubMed:19571146, PubMed:24196565, PubMed:26919430). Homo- and heterodimerizes to form functional channels with distinct regulatory and gating properties (PubMed:24196565). In trigeminal ganglia sensory neurons, the heterodimer of KCNK2/TREK-1 and KCNK18/TRESK inhibits neuronal firing and neurogenic inflammation by stabilizing the resting membrane potential at K(+) equilibrium potential as well as by regulating the threshold of action potentials and the spike frequency (By similarity). At trigeminal A-beta afferent nerves, the heterodimer of KCNK2/TREK-1 and KCNK4/TRAAK is mostly coexpressed at nodes of Ranvier where it conducts voltage-independent mechanosensitive and thermosensitive currents, allowing rapid action potential repolarization, high speed and high frequence saltatory conduction on myelinated nerves to ensure prompt sensory responses (PubMed:31630908). In hippocampal astrocytes, the heterodimer of KCNK2/TREK-1 and KCNK1/TWIK-1 allows passive K(+) conductance under basal conditions, but changes ion selectivity and becomes permeable to L-glutamate and Cl(-) ions upon binding to G-protein subunit GNG4 in stimulated astrocytes. Mediates rapid L-glutamate release in response to activation of G-protein-coupled receptors such as F2R and CNR1 (PubMed:23021213). In hippocampal pyramidal neurons, the homodimer of KCNK2/TREK-1 contributes to gamma-aminobutyric acid (GABA) B-induced slow inhibitory postsynaptic potential. Associates with AKAP5 and Gs-protein-coupled receptor B2AR at postsynaptic dense bodies and converts to a leak channel no longer sensitive to stimulation by arachidonic acid, acidic pH or mechanical stress, nor inhibited by Gq-coupled receptors but still under the negative control of Gs-coupled receptors (By similarity). Permeable to other monovalent cations such as Rb(+) and Cs(+) (PubMed:26919430).</text>
</comment>
<comment type="function">
    <molecule>Isoform 5</molecule>
    <text evidence="10">Does not display channel activity but reduces the channel activity of isoform 1, isoform 2 and isoform 4 and reduces cell surface expression of isoform 2.</text>
</comment>
<comment type="catalytic activity">
    <reaction evidence="7 8 10 11 12">
        <text>K(+)(in) = K(+)(out)</text>
        <dbReference type="Rhea" id="RHEA:29463"/>
        <dbReference type="ChEBI" id="CHEBI:29103"/>
    </reaction>
</comment>
<comment type="catalytic activity">
    <reaction evidence="9">
        <text>L-glutamate(out) = L-glutamate(in)</text>
        <dbReference type="Rhea" id="RHEA:66336"/>
        <dbReference type="ChEBI" id="CHEBI:29985"/>
    </reaction>
</comment>
<comment type="catalytic activity">
    <reaction evidence="9">
        <text>chloride(in) = chloride(out)</text>
        <dbReference type="Rhea" id="RHEA:29823"/>
        <dbReference type="ChEBI" id="CHEBI:17996"/>
    </reaction>
</comment>
<comment type="catalytic activity">
    <reaction evidence="8 11">
        <text>Rb(+)(in) = Rb(+)(out)</text>
        <dbReference type="Rhea" id="RHEA:78547"/>
        <dbReference type="ChEBI" id="CHEBI:49847"/>
    </reaction>
</comment>
<comment type="catalytic activity">
    <reaction evidence="8 11">
        <text>Cs(+)(in) = Cs(+)(out)</text>
        <dbReference type="Rhea" id="RHEA:78555"/>
        <dbReference type="ChEBI" id="CHEBI:49547"/>
    </reaction>
</comment>
<comment type="activity regulation">
    <text evidence="7 11">Activated by various stimuli including intracellular acidic pH, mechanical stretch and polyunsaturated fatty acids such as arachidonic acid.</text>
</comment>
<comment type="subunit">
    <text evidence="3 9">Homodimer; disulfide-linked. Forms heterodimers with other 2-pore domain K(+) channel subunits, such as KCNK1, KCNK4, KCNK10 and KCNK18 (By similarity). Interacts with AKAP5; the channel is recruited to postsynaptic microdomains by AKAP5 where it can integrate neurotransmitter receptor signals. Part of a complex composed of AKAP5 and ADRB2. Upon AKAP5 binding, the channel is no longer sensitive to intracellular acidification, membrane stretch or arachidonic acid stimuli (By similarity). Interacts with POPDC1; the interaction enhances KCNK2 surface expression and is inhibited by cAMP (By similarity). Interacts (via N-terminus) with G-protein subunit GNG4 (via C-terminus); this interaction confers ion selectivity to L-glutamate and Cl(-) anions (PubMed:23021213).</text>
</comment>
<comment type="interaction">
    <interactant intactId="EBI-6530063">
        <id>Q920B6</id>
    </interactant>
    <interactant intactId="EBI-6395970">
        <id>P50150</id>
        <label>GNG4</label>
    </interactant>
    <organismsDiffer>true</organismsDiffer>
    <experiments>3</experiments>
</comment>
<comment type="subcellular location">
    <molecule>Isoform 1</molecule>
    <subcellularLocation>
        <location evidence="10">Cell membrane</location>
        <topology evidence="10">Multi-pass membrane protein</topology>
    </subcellularLocation>
</comment>
<comment type="subcellular location">
    <molecule>Isoform 2</molecule>
    <subcellularLocation>
        <location evidence="10">Cell membrane</location>
        <topology evidence="10">Multi-pass membrane protein</topology>
    </subcellularLocation>
</comment>
<comment type="subcellular location">
    <molecule>Isoform 5</molecule>
    <subcellularLocation>
        <location evidence="10">Endoplasmic reticulum membrane</location>
        <topology evidence="10">Multi-pass membrane protein</topology>
    </subcellularLocation>
</comment>
<comment type="subcellular location">
    <subcellularLocation>
        <location evidence="12">Cell projection</location>
        <location evidence="12">Axon</location>
    </subcellularLocation>
    <subcellularLocation>
        <location evidence="3">Cell projection</location>
        <location evidence="3">Dendrite</location>
    </subcellularLocation>
    <subcellularLocation>
        <location evidence="3">Postsynaptic density membrane</location>
        <topology evidence="4">Multi-pass membrane protein</topology>
    </subcellularLocation>
    <subcellularLocation>
        <location evidence="7">Cell membrane</location>
        <location evidence="7">Sarcolemma</location>
        <topology evidence="4">Multi-pass membrane protein</topology>
    </subcellularLocation>
    <text evidence="12">Localizes at the Ranvier nodes of myelinated afferent nerves.</text>
</comment>
<comment type="alternative products">
    <event type="alternative splicing"/>
    <isoform>
        <id>Q920B6-1</id>
        <name evidence="5 6">1</name>
        <name evidence="14">TREK-1b</name>
        <sequence type="displayed"/>
    </isoform>
    <isoform>
        <id>Q920B6-2</id>
        <name evidence="7">2</name>
        <name evidence="14">TREK-1a</name>
        <sequence type="described" ref="VSP_053954"/>
    </isoform>
    <isoform>
        <id>Q920B6-3</id>
        <name evidence="10">3</name>
        <name evidence="14">TREK-1c</name>
        <sequence type="described" ref="VSP_053952"/>
    </isoform>
    <isoform>
        <id>Q920B6-4</id>
        <name evidence="10">4</name>
        <name evidence="14">TREK-1d</name>
        <sequence type="described" ref="VSP_053953"/>
    </isoform>
    <isoform>
        <id>Q920B6-5</id>
        <name evidence="10">5</name>
        <name evidence="14">TREK-1e</name>
        <sequence type="described" ref="VSP_053954 VSP_053955 VSP_053956"/>
    </isoform>
</comment>
<comment type="tissue specificity">
    <text evidence="6 7 8 10">Expressed in cardiomyocytes (at protein level). Expressed in various brain regions including the lateral olfactory tract, piriform cortex of the forebrain, paraventricular and anteromedial thalamic nuclei, brainstem, caudate putamen, nucleus accumbens, neocortex and interpeduncular nucleus. Detected in astrocytes in hippocampus stratum radiatum (PubMed:19571146).</text>
</comment>
<comment type="tissue specificity">
    <molecule>Isoform 5</molecule>
    <text evidence="10">Expressed in brain and kidney.</text>
</comment>
<comment type="domain">
    <text evidence="2">The pore-forming domains 1 and 2 assemble to form a single pore in which M2 and M4 transmembrane helices line the central cavity and M1 and M3 face the lipid bilayer. The transmembrane helices are bridged by the selectivity filters 1 and 2 carrying a signature sequence TxTTxGYGD that coordinate the permeant ions. Up to four ions can simultaneously occupy the selectivity filter and at least two elementary charges must translocate across the filter to convert it into the open conformation.</text>
</comment>
<comment type="domain">
    <molecule>Isoform 5</molecule>
    <text evidence="10">The C-terminal region of isoform 5 mediates its intracellular retention.</text>
</comment>
<comment type="PTM">
    <text evidence="1">Phosphorylation at Ser-348 controls the reversible conversion from a leak channel to a voltage-dependent channel.</text>
</comment>
<comment type="similarity">
    <text evidence="4">Belongs to the two pore domain potassium channel (TC 1.A.1.8) family.</text>
</comment>
<evidence type="ECO:0000250" key="1">
    <source>
        <dbReference type="UniProtKB" id="O95069"/>
    </source>
</evidence>
<evidence type="ECO:0000250" key="2">
    <source>
        <dbReference type="UniProtKB" id="P57789"/>
    </source>
</evidence>
<evidence type="ECO:0000250" key="3">
    <source>
        <dbReference type="UniProtKB" id="P97438"/>
    </source>
</evidence>
<evidence type="ECO:0000255" key="4"/>
<evidence type="ECO:0000269" key="5">
    <source>
    </source>
</evidence>
<evidence type="ECO:0000269" key="6">
    <source>
    </source>
</evidence>
<evidence type="ECO:0000269" key="7">
    <source>
    </source>
</evidence>
<evidence type="ECO:0000269" key="8">
    <source>
    </source>
</evidence>
<evidence type="ECO:0000269" key="9">
    <source>
    </source>
</evidence>
<evidence type="ECO:0000269" key="10">
    <source>
    </source>
</evidence>
<evidence type="ECO:0000269" key="11">
    <source>
    </source>
</evidence>
<evidence type="ECO:0000269" key="12">
    <source>
    </source>
</evidence>
<evidence type="ECO:0000303" key="13">
    <source>
    </source>
</evidence>
<evidence type="ECO:0000303" key="14">
    <source>
    </source>
</evidence>
<evidence type="ECO:0000305" key="15"/>
<evidence type="ECO:0000305" key="16">
    <source>
    </source>
</evidence>
<evidence type="ECO:0000312" key="17">
    <source>
        <dbReference type="EMBL" id="AAL01159.1"/>
    </source>
</evidence>
<evidence type="ECO:0000312" key="18">
    <source>
        <dbReference type="EMBL" id="AAL95708.1"/>
    </source>
</evidence>
<evidence type="ECO:0000312" key="19">
    <source>
        <dbReference type="EMBL" id="AAU06141.1"/>
    </source>
</evidence>
<evidence type="ECO:0000312" key="20">
    <source>
        <dbReference type="EMBL" id="AAU25945.1"/>
    </source>
</evidence>
<evidence type="ECO:0000312" key="21">
    <source>
        <dbReference type="EMBL" id="ABD64605.1"/>
    </source>
</evidence>
<evidence type="ECO:0000312" key="22">
    <source>
        <dbReference type="RGD" id="621448"/>
    </source>
</evidence>
<protein>
    <recommendedName>
        <fullName evidence="1">Potassium channel subfamily K member 2</fullName>
    </recommendedName>
    <alternativeName>
        <fullName evidence="1">Outward rectifying potassium channel protein TREK-1</fullName>
    </alternativeName>
    <alternativeName>
        <fullName evidence="13">Stretch-activated potassium channel TREK-1</fullName>
    </alternativeName>
    <alternativeName>
        <fullName evidence="1">TREK-1 K(+) channel subunit</fullName>
    </alternativeName>
    <alternativeName>
        <fullName evidence="14">Two pore domain potassium channel TREK-1</fullName>
    </alternativeName>
    <alternativeName>
        <fullName evidence="1">Two pore potassium channel TPKC1</fullName>
    </alternativeName>
</protein>
<name>KCNK2_RAT</name>
<feature type="chain" id="PRO_0000426718" description="Potassium channel subfamily K member 2">
    <location>
        <begin position="1"/>
        <end position="426"/>
    </location>
</feature>
<feature type="topological domain" description="Cytoplasmic" evidence="4">
    <location>
        <begin position="1"/>
        <end position="61"/>
    </location>
</feature>
<feature type="transmembrane region" description="Helical" evidence="4">
    <location>
        <begin position="62"/>
        <end position="82"/>
    </location>
</feature>
<feature type="intramembrane region" description="Pore-forming; Name=Pore-forming 1" evidence="4">
    <location>
        <begin position="144"/>
        <end position="170"/>
    </location>
</feature>
<feature type="transmembrane region" description="Helical" evidence="4">
    <location>
        <begin position="172"/>
        <end position="192"/>
    </location>
</feature>
<feature type="topological domain" description="Cytoplasmic" evidence="4">
    <location>
        <begin position="193"/>
        <end position="222"/>
    </location>
</feature>
<feature type="transmembrane region" description="Helical" evidence="4">
    <location>
        <begin position="223"/>
        <end position="243"/>
    </location>
</feature>
<feature type="intramembrane region" description="Pore-forming; Name=Pore-forming 2" evidence="4">
    <location>
        <begin position="253"/>
        <end position="283"/>
    </location>
</feature>
<feature type="transmembrane region" description="Helical" evidence="4">
    <location>
        <begin position="288"/>
        <end position="308"/>
    </location>
</feature>
<feature type="topological domain" description="Cytoplasmic" evidence="4">
    <location>
        <begin position="309"/>
        <end position="426"/>
    </location>
</feature>
<feature type="region of interest" description="Important for GNG4 binding and L-glutamate release in astrocytes" evidence="9">
    <location>
        <begin position="17"/>
        <end position="38"/>
    </location>
</feature>
<feature type="region of interest" description="Important for GNG4 binding and L-glutamate release in astrocytes" evidence="9">
    <location>
        <begin position="51"/>
        <end position="61"/>
    </location>
</feature>
<feature type="region of interest" description="Selectivity filter 1" evidence="16">
    <location>
        <begin position="157"/>
        <end position="162"/>
    </location>
</feature>
<feature type="region of interest" description="Selectivity filter 2" evidence="16">
    <location>
        <begin position="266"/>
        <end position="271"/>
    </location>
</feature>
<feature type="region of interest" description="Interaction with AKAP5" evidence="3">
    <location>
        <begin position="313"/>
        <end position="326"/>
    </location>
</feature>
<feature type="region of interest" description="Essential for chloroform and halothane sensitivity" evidence="3">
    <location>
        <begin position="337"/>
        <end position="385"/>
    </location>
</feature>
<feature type="binding site" evidence="3">
    <location>
        <position position="157"/>
    </location>
    <ligand>
        <name>K(+)</name>
        <dbReference type="ChEBI" id="CHEBI:29103"/>
        <label>1</label>
    </ligand>
</feature>
<feature type="binding site" evidence="3">
    <location>
        <position position="157"/>
    </location>
    <ligand>
        <name>K(+)</name>
        <dbReference type="ChEBI" id="CHEBI:29103"/>
        <label>4</label>
    </ligand>
</feature>
<feature type="binding site" evidence="3">
    <location>
        <position position="158"/>
    </location>
    <ligand>
        <name>K(+)</name>
        <dbReference type="ChEBI" id="CHEBI:29103"/>
        <label>1</label>
    </ligand>
</feature>
<feature type="binding site" evidence="3">
    <location>
        <position position="158"/>
    </location>
    <ligand>
        <name>K(+)</name>
        <dbReference type="ChEBI" id="CHEBI:29103"/>
        <label>2</label>
    </ligand>
</feature>
<feature type="binding site" evidence="3">
    <location>
        <position position="159"/>
    </location>
    <ligand>
        <name>K(+)</name>
        <dbReference type="ChEBI" id="CHEBI:29103"/>
        <label>2</label>
    </ligand>
</feature>
<feature type="binding site" evidence="3">
    <location>
        <position position="159"/>
    </location>
    <ligand>
        <name>K(+)</name>
        <dbReference type="ChEBI" id="CHEBI:29103"/>
        <label>3</label>
    </ligand>
</feature>
<feature type="binding site" evidence="3">
    <location>
        <position position="160"/>
    </location>
    <ligand>
        <name>K(+)</name>
        <dbReference type="ChEBI" id="CHEBI:29103"/>
        <label>3</label>
    </ligand>
</feature>
<feature type="binding site" evidence="3">
    <location>
        <position position="266"/>
    </location>
    <ligand>
        <name>K(+)</name>
        <dbReference type="ChEBI" id="CHEBI:29103"/>
        <label>1</label>
    </ligand>
</feature>
<feature type="binding site" evidence="3">
    <location>
        <position position="266"/>
    </location>
    <ligand>
        <name>K(+)</name>
        <dbReference type="ChEBI" id="CHEBI:29103"/>
        <label>4</label>
    </ligand>
</feature>
<feature type="binding site" evidence="3">
    <location>
        <position position="267"/>
    </location>
    <ligand>
        <name>K(+)</name>
        <dbReference type="ChEBI" id="CHEBI:29103"/>
        <label>1</label>
    </ligand>
</feature>
<feature type="binding site" evidence="3">
    <location>
        <position position="267"/>
    </location>
    <ligand>
        <name>K(+)</name>
        <dbReference type="ChEBI" id="CHEBI:29103"/>
        <label>2</label>
    </ligand>
</feature>
<feature type="binding site" evidence="3">
    <location>
        <position position="268"/>
    </location>
    <ligand>
        <name>K(+)</name>
        <dbReference type="ChEBI" id="CHEBI:29103"/>
        <label>2</label>
    </ligand>
</feature>
<feature type="binding site" evidence="3">
    <location>
        <position position="268"/>
    </location>
    <ligand>
        <name>K(+)</name>
        <dbReference type="ChEBI" id="CHEBI:29103"/>
        <label>3</label>
    </ligand>
</feature>
<feature type="binding site" evidence="3">
    <location>
        <position position="269"/>
    </location>
    <ligand>
        <name>K(+)</name>
        <dbReference type="ChEBI" id="CHEBI:29103"/>
        <label>3</label>
    </ligand>
</feature>
<feature type="site" description="pH sensor" evidence="3">
    <location>
        <position position="141"/>
    </location>
</feature>
<feature type="modified residue" description="Phosphoserine; by PKA" evidence="1">
    <location>
        <position position="348"/>
    </location>
</feature>
<feature type="glycosylation site" description="N-linked (GlcNAc...) asparagine" evidence="4">
    <location>
        <position position="110"/>
    </location>
</feature>
<feature type="glycosylation site" description="N-linked (GlcNAc...) asparagine" evidence="4">
    <location>
        <position position="134"/>
    </location>
</feature>
<feature type="disulfide bond" description="Interchain (with C-108)" evidence="3">
    <location>
        <position position="108"/>
    </location>
</feature>
<feature type="splice variant" id="VSP_053952" description="In isoform 3." evidence="14">
    <original>MLASASRERPGYTAGV</original>
    <variation>MMNPRAKRSVYL</variation>
    <location>
        <begin position="1"/>
        <end position="16"/>
    </location>
</feature>
<feature type="splice variant" id="VSP_053953" description="In isoform 4." evidence="14">
    <original>MLASASRERPGYTAG</original>
    <variation>MGA</variation>
    <location>
        <begin position="1"/>
        <end position="15"/>
    </location>
</feature>
<feature type="splice variant" id="VSP_053954" description="In isoform 2 and isoform 5." evidence="13 14">
    <location>
        <begin position="2"/>
        <end position="16"/>
    </location>
</feature>
<feature type="splice variant" id="VSP_053955" description="In isoform 5." evidence="14">
    <original>KWNVSQTKIRIISTIIFILFGCVLFVALP</original>
    <variation>VGRTLNIWTSTSSSCGSGSSLGWPTLRLF</variation>
    <location>
        <begin position="213"/>
        <end position="241"/>
    </location>
</feature>
<feature type="splice variant" id="VSP_053956" description="In isoform 5." evidence="14">
    <location>
        <begin position="242"/>
        <end position="426"/>
    </location>
</feature>
<feature type="mutagenesis site" description="No effect on voltage-dependent channel gating." evidence="11">
    <original>I</original>
    <variation>C</variation>
    <location>
        <position position="155"/>
    </location>
</feature>
<feature type="mutagenesis site" description="No effect on voltage-dependent channel gating." evidence="11">
    <original>T</original>
    <variation>C</variation>
    <location>
        <position position="156"/>
    </location>
</feature>
<feature type="mutagenesis site" description="Loss of voltage-dependent channel gating." evidence="11">
    <original>T</original>
    <variation>C</variation>
    <location>
        <position position="157"/>
    </location>
</feature>
<feature type="mutagenesis site" description="No effect on voltage-dependent channel gating." evidence="11">
    <original>I</original>
    <variation>C</variation>
    <location>
        <position position="158"/>
    </location>
</feature>
<feature type="mutagenesis site" description="No effect on voltage-dependent channel gating." evidence="11">
    <original>N</original>
    <variation>C</variation>
    <location>
        <position position="162"/>
    </location>
</feature>
<feature type="mutagenesis site" description="No effect on voltage-dependent channel gating." evidence="11">
    <original>I</original>
    <variation>C</variation>
    <location>
        <position position="163"/>
    </location>
</feature>
<feature type="mutagenesis site" description="No effect on voltage-dependent channel gating." evidence="11">
    <original>T</original>
    <variation>C</variation>
    <location>
        <position position="265"/>
    </location>
</feature>
<feature type="mutagenesis site" description="Loss of voltage-dependent channel gating." evidence="11">
    <original>T</original>
    <variation>C</variation>
    <location>
        <position position="266"/>
    </location>
</feature>
<feature type="mutagenesis site" description="No effect on voltage-dependent channel gating." evidence="11">
    <original>I</original>
    <variation>C</variation>
    <location>
        <position position="267"/>
    </location>
</feature>
<feature type="sequence conflict" description="In Ref. 4; ABD64605." evidence="15" ref="4">
    <original>A</original>
    <variation>R</variation>
    <location>
        <position position="416"/>
    </location>
</feature>
<feature type="mutagenesis site" description="Loss of G protein-coupled receptor-induced anion conductance in astrocytes." evidence="9">
    <original>G</original>
    <variation>E</variation>
    <location sequence="Q920B6-2">
        <position position="144"/>
    </location>
</feature>
<proteinExistence type="evidence at protein level"/>
<dbReference type="EMBL" id="AF325671">
    <property type="protein sequence ID" value="AAL01159.1"/>
    <property type="molecule type" value="mRNA"/>
</dbReference>
<dbReference type="EMBL" id="AF385402">
    <property type="protein sequence ID" value="AAL95708.1"/>
    <property type="molecule type" value="mRNA"/>
</dbReference>
<dbReference type="EMBL" id="AY727922">
    <property type="protein sequence ID" value="AAU25945.1"/>
    <property type="molecule type" value="mRNA"/>
</dbReference>
<dbReference type="EMBL" id="AY555072">
    <property type="protein sequence ID" value="AAT64134.1"/>
    <property type="molecule type" value="mRNA"/>
</dbReference>
<dbReference type="EMBL" id="AY555073">
    <property type="protein sequence ID" value="AAT64135.1"/>
    <property type="molecule type" value="mRNA"/>
</dbReference>
<dbReference type="EMBL" id="DQ403851">
    <property type="protein sequence ID" value="ABD64605.1"/>
    <property type="molecule type" value="mRNA"/>
</dbReference>
<dbReference type="EMBL" id="AY695826">
    <property type="protein sequence ID" value="AAU06141.1"/>
    <property type="molecule type" value="mRNA"/>
</dbReference>
<dbReference type="EMBL" id="AABR06076806">
    <property type="status" value="NOT_ANNOTATED_CDS"/>
    <property type="molecule type" value="Genomic_DNA"/>
</dbReference>
<dbReference type="EMBL" id="AABR06076807">
    <property type="status" value="NOT_ANNOTATED_CDS"/>
    <property type="molecule type" value="Genomic_DNA"/>
</dbReference>
<dbReference type="EMBL" id="AABR06076808">
    <property type="status" value="NOT_ANNOTATED_CDS"/>
    <property type="molecule type" value="Genomic_DNA"/>
</dbReference>
<dbReference type="EMBL" id="AABR06076809">
    <property type="status" value="NOT_ANNOTATED_CDS"/>
    <property type="molecule type" value="Genomic_DNA"/>
</dbReference>
<dbReference type="EMBL" id="CH473985">
    <property type="protein sequence ID" value="EDL94961.1"/>
    <property type="molecule type" value="Genomic_DNA"/>
</dbReference>
<dbReference type="EMBL" id="CH473985">
    <property type="protein sequence ID" value="EDL94962.1"/>
    <property type="molecule type" value="Genomic_DNA"/>
</dbReference>
<dbReference type="RefSeq" id="NP_742038.2">
    <property type="nucleotide sequence ID" value="NM_172041.2"/>
</dbReference>
<dbReference type="RefSeq" id="NP_742039.1">
    <molecule id="Q920B6-1"/>
    <property type="nucleotide sequence ID" value="NM_172042.2"/>
</dbReference>
<dbReference type="RefSeq" id="XP_006250495.1">
    <molecule id="Q920B6-4"/>
    <property type="nucleotide sequence ID" value="XM_006250433.5"/>
</dbReference>
<dbReference type="RefSeq" id="XP_006250496.1">
    <molecule id="Q920B6-2"/>
    <property type="nucleotide sequence ID" value="XM_006250434.4"/>
</dbReference>
<dbReference type="SMR" id="Q920B6"/>
<dbReference type="FunCoup" id="Q920B6">
    <property type="interactions" value="876"/>
</dbReference>
<dbReference type="IntAct" id="Q920B6">
    <property type="interactions" value="9"/>
</dbReference>
<dbReference type="STRING" id="10116.ENSRNOP00000003684"/>
<dbReference type="BindingDB" id="Q920B6"/>
<dbReference type="ChEMBL" id="CHEMBL3817718"/>
<dbReference type="GlyCosmos" id="Q920B6">
    <property type="glycosylation" value="2 sites, No reported glycans"/>
</dbReference>
<dbReference type="GlyGen" id="Q920B6">
    <property type="glycosylation" value="2 sites"/>
</dbReference>
<dbReference type="PhosphoSitePlus" id="Q920B6"/>
<dbReference type="PaxDb" id="10116-ENSRNOP00000003684"/>
<dbReference type="Ensembl" id="ENSRNOT00000003684.6">
    <molecule id="Q920B6-1"/>
    <property type="protein sequence ID" value="ENSRNOP00000003684.4"/>
    <property type="gene ID" value="ENSRNOG00000002653.8"/>
</dbReference>
<dbReference type="Ensembl" id="ENSRNOT00000077282.2">
    <molecule id="Q920B6-3"/>
    <property type="protein sequence ID" value="ENSRNOP00000068842.1"/>
    <property type="gene ID" value="ENSRNOG00000002653.8"/>
</dbReference>
<dbReference type="Ensembl" id="ENSRNOT00000103519.1">
    <molecule id="Q920B6-4"/>
    <property type="protein sequence ID" value="ENSRNOP00000077148.1"/>
    <property type="gene ID" value="ENSRNOG00000002653.8"/>
</dbReference>
<dbReference type="Ensembl" id="ENSRNOT00000107139.1">
    <molecule id="Q920B6-2"/>
    <property type="protein sequence ID" value="ENSRNOP00000087071.1"/>
    <property type="gene ID" value="ENSRNOG00000002653.8"/>
</dbReference>
<dbReference type="GeneID" id="170899"/>
<dbReference type="KEGG" id="rno:170899"/>
<dbReference type="UCSC" id="RGD:621448">
    <molecule id="Q920B6-1"/>
    <property type="organism name" value="rat"/>
</dbReference>
<dbReference type="AGR" id="RGD:621448"/>
<dbReference type="CTD" id="3776"/>
<dbReference type="RGD" id="621448">
    <property type="gene designation" value="Kcnk2"/>
</dbReference>
<dbReference type="eggNOG" id="KOG1418">
    <property type="taxonomic scope" value="Eukaryota"/>
</dbReference>
<dbReference type="GeneTree" id="ENSGT00940000156560"/>
<dbReference type="HOGENOM" id="CLU_022504_10_0_1"/>
<dbReference type="InParanoid" id="Q920B6"/>
<dbReference type="OMA" id="ANLCEDR"/>
<dbReference type="OrthoDB" id="297496at2759"/>
<dbReference type="PhylomeDB" id="Q920B6"/>
<dbReference type="TreeFam" id="TF313947"/>
<dbReference type="Reactome" id="R-RNO-1299503">
    <property type="pathway name" value="TWIK related potassium channel (TREK)"/>
</dbReference>
<dbReference type="Reactome" id="R-RNO-5576886">
    <property type="pathway name" value="Phase 4 - resting membrane potential"/>
</dbReference>
<dbReference type="PRO" id="PR:Q920B6"/>
<dbReference type="Proteomes" id="UP000002494">
    <property type="component" value="Chromosome 13"/>
</dbReference>
<dbReference type="Proteomes" id="UP000234681">
    <property type="component" value="Chromosome 13"/>
</dbReference>
<dbReference type="Bgee" id="ENSRNOG00000002653">
    <property type="expression patterns" value="Expressed in frontal cortex and 15 other cell types or tissues"/>
</dbReference>
<dbReference type="GO" id="GO:0016324">
    <property type="term" value="C:apical plasma membrane"/>
    <property type="evidence" value="ECO:0000314"/>
    <property type="project" value="RGD"/>
</dbReference>
<dbReference type="GO" id="GO:0097449">
    <property type="term" value="C:astrocyte projection"/>
    <property type="evidence" value="ECO:0000314"/>
    <property type="project" value="RGD"/>
</dbReference>
<dbReference type="GO" id="GO:0030424">
    <property type="term" value="C:axon"/>
    <property type="evidence" value="ECO:0000314"/>
    <property type="project" value="RGD"/>
</dbReference>
<dbReference type="GO" id="GO:0043679">
    <property type="term" value="C:axon terminus"/>
    <property type="evidence" value="ECO:0000314"/>
    <property type="project" value="RGD"/>
</dbReference>
<dbReference type="GO" id="GO:0044305">
    <property type="term" value="C:calyx of Held"/>
    <property type="evidence" value="ECO:0000314"/>
    <property type="project" value="RGD"/>
</dbReference>
<dbReference type="GO" id="GO:0009986">
    <property type="term" value="C:cell surface"/>
    <property type="evidence" value="ECO:0000314"/>
    <property type="project" value="RGD"/>
</dbReference>
<dbReference type="GO" id="GO:0030425">
    <property type="term" value="C:dendrite"/>
    <property type="evidence" value="ECO:0000250"/>
    <property type="project" value="UniProtKB"/>
</dbReference>
<dbReference type="GO" id="GO:0005783">
    <property type="term" value="C:endoplasmic reticulum"/>
    <property type="evidence" value="ECO:0000314"/>
    <property type="project" value="UniProtKB"/>
</dbReference>
<dbReference type="GO" id="GO:0005789">
    <property type="term" value="C:endoplasmic reticulum membrane"/>
    <property type="evidence" value="ECO:0007669"/>
    <property type="project" value="UniProtKB-SubCell"/>
</dbReference>
<dbReference type="GO" id="GO:0043025">
    <property type="term" value="C:neuronal cell body"/>
    <property type="evidence" value="ECO:0000314"/>
    <property type="project" value="RGD"/>
</dbReference>
<dbReference type="GO" id="GO:0033268">
    <property type="term" value="C:node of Ranvier"/>
    <property type="evidence" value="ECO:0000314"/>
    <property type="project" value="UniProtKB"/>
</dbReference>
<dbReference type="GO" id="GO:0005886">
    <property type="term" value="C:plasma membrane"/>
    <property type="evidence" value="ECO:0000314"/>
    <property type="project" value="UniProtKB"/>
</dbReference>
<dbReference type="GO" id="GO:0098839">
    <property type="term" value="C:postsynaptic density membrane"/>
    <property type="evidence" value="ECO:0007669"/>
    <property type="project" value="UniProtKB-SubCell"/>
</dbReference>
<dbReference type="GO" id="GO:0042383">
    <property type="term" value="C:sarcolemma"/>
    <property type="evidence" value="ECO:0007669"/>
    <property type="project" value="UniProtKB-SubCell"/>
</dbReference>
<dbReference type="GO" id="GO:0098685">
    <property type="term" value="C:Schaffer collateral - CA1 synapse"/>
    <property type="evidence" value="ECO:0000266"/>
    <property type="project" value="RGD"/>
</dbReference>
<dbReference type="GO" id="GO:0008076">
    <property type="term" value="C:voltage-gated potassium channel complex"/>
    <property type="evidence" value="ECO:0000266"/>
    <property type="project" value="RGD"/>
</dbReference>
<dbReference type="GO" id="GO:0042802">
    <property type="term" value="F:identical protein binding"/>
    <property type="evidence" value="ECO:0000250"/>
    <property type="project" value="UniProtKB"/>
</dbReference>
<dbReference type="GO" id="GO:0022834">
    <property type="term" value="F:ligand-gated channel activity"/>
    <property type="evidence" value="ECO:0000314"/>
    <property type="project" value="UniProtKB"/>
</dbReference>
<dbReference type="GO" id="GO:0098782">
    <property type="term" value="F:mechanosensitive potassium channel activity"/>
    <property type="evidence" value="ECO:0000250"/>
    <property type="project" value="UniProtKB"/>
</dbReference>
<dbReference type="GO" id="GO:0046872">
    <property type="term" value="F:metal ion binding"/>
    <property type="evidence" value="ECO:0007669"/>
    <property type="project" value="UniProtKB-KW"/>
</dbReference>
<dbReference type="GO" id="GO:0015271">
    <property type="term" value="F:outward rectifier potassium channel activity"/>
    <property type="evidence" value="ECO:0000314"/>
    <property type="project" value="UniProtKB"/>
</dbReference>
<dbReference type="GO" id="GO:0019870">
    <property type="term" value="F:potassium channel inhibitor activity"/>
    <property type="evidence" value="ECO:0000314"/>
    <property type="project" value="UniProtKB"/>
</dbReference>
<dbReference type="GO" id="GO:0022841">
    <property type="term" value="F:potassium ion leak channel activity"/>
    <property type="evidence" value="ECO:0000314"/>
    <property type="project" value="UniProtKB"/>
</dbReference>
<dbReference type="GO" id="GO:0046982">
    <property type="term" value="F:protein heterodimerization activity"/>
    <property type="evidence" value="ECO:0000250"/>
    <property type="project" value="UniProtKB"/>
</dbReference>
<dbReference type="GO" id="GO:0005249">
    <property type="term" value="F:voltage-gated potassium channel activity"/>
    <property type="evidence" value="ECO:0000266"/>
    <property type="project" value="RGD"/>
</dbReference>
<dbReference type="GO" id="GO:0003231">
    <property type="term" value="P:cardiac ventricle development"/>
    <property type="evidence" value="ECO:0000270"/>
    <property type="project" value="RGD"/>
</dbReference>
<dbReference type="GO" id="GO:1904551">
    <property type="term" value="P:cellular response to arachidonate"/>
    <property type="evidence" value="ECO:0000314"/>
    <property type="project" value="UniProtKB"/>
</dbReference>
<dbReference type="GO" id="GO:0071456">
    <property type="term" value="P:cellular response to hypoxia"/>
    <property type="evidence" value="ECO:0000270"/>
    <property type="project" value="RGD"/>
</dbReference>
<dbReference type="GO" id="GO:0099565">
    <property type="term" value="P:chemical synaptic transmission, postsynaptic"/>
    <property type="evidence" value="ECO:0000266"/>
    <property type="project" value="RGD"/>
</dbReference>
<dbReference type="GO" id="GO:1902476">
    <property type="term" value="P:chloride transmembrane transport"/>
    <property type="evidence" value="ECO:0000250"/>
    <property type="project" value="UniProtKB"/>
</dbReference>
<dbReference type="GO" id="GO:0090102">
    <property type="term" value="P:cochlea development"/>
    <property type="evidence" value="ECO:0000270"/>
    <property type="project" value="RGD"/>
</dbReference>
<dbReference type="GO" id="GO:0050976">
    <property type="term" value="P:detection of mechanical stimulus involved in sensory perception of touch"/>
    <property type="evidence" value="ECO:0000315"/>
    <property type="project" value="UniProtKB"/>
</dbReference>
<dbReference type="GO" id="GO:0007186">
    <property type="term" value="P:G protein-coupled receptor signaling pathway"/>
    <property type="evidence" value="ECO:0000266"/>
    <property type="project" value="RGD"/>
</dbReference>
<dbReference type="GO" id="GO:0014047">
    <property type="term" value="P:glutamate secretion"/>
    <property type="evidence" value="ECO:0000314"/>
    <property type="project" value="UniProtKB"/>
</dbReference>
<dbReference type="GO" id="GO:0007613">
    <property type="term" value="P:memory"/>
    <property type="evidence" value="ECO:0000270"/>
    <property type="project" value="RGD"/>
</dbReference>
<dbReference type="GO" id="GO:0060044">
    <property type="term" value="P:negative regulation of cardiac muscle cell proliferation"/>
    <property type="evidence" value="ECO:0000315"/>
    <property type="project" value="RGD"/>
</dbReference>
<dbReference type="GO" id="GO:2000279">
    <property type="term" value="P:negative regulation of DNA biosynthetic process"/>
    <property type="evidence" value="ECO:0000315"/>
    <property type="project" value="RGD"/>
</dbReference>
<dbReference type="GO" id="GO:0019228">
    <property type="term" value="P:neuronal action potential"/>
    <property type="evidence" value="ECO:0000315"/>
    <property type="project" value="UniProtKB"/>
</dbReference>
<dbReference type="GO" id="GO:0006836">
    <property type="term" value="P:neurotransmitter transport"/>
    <property type="evidence" value="ECO:0007669"/>
    <property type="project" value="UniProtKB-KW"/>
</dbReference>
<dbReference type="GO" id="GO:1900039">
    <property type="term" value="P:positive regulation of cellular response to hypoxia"/>
    <property type="evidence" value="ECO:0000315"/>
    <property type="project" value="RGD"/>
</dbReference>
<dbReference type="GO" id="GO:0071805">
    <property type="term" value="P:potassium ion transmembrane transport"/>
    <property type="evidence" value="ECO:0000314"/>
    <property type="project" value="UniProtKB"/>
</dbReference>
<dbReference type="GO" id="GO:0006813">
    <property type="term" value="P:potassium ion transport"/>
    <property type="evidence" value="ECO:0000266"/>
    <property type="project" value="RGD"/>
</dbReference>
<dbReference type="GO" id="GO:0042391">
    <property type="term" value="P:regulation of membrane potential"/>
    <property type="evidence" value="ECO:0000266"/>
    <property type="project" value="RGD"/>
</dbReference>
<dbReference type="GO" id="GO:0032228">
    <property type="term" value="P:regulation of synaptic transmission, GABAergic"/>
    <property type="evidence" value="ECO:0000250"/>
    <property type="project" value="UniProtKB"/>
</dbReference>
<dbReference type="GO" id="GO:0048678">
    <property type="term" value="P:response to axon injury"/>
    <property type="evidence" value="ECO:0000270"/>
    <property type="project" value="RGD"/>
</dbReference>
<dbReference type="GO" id="GO:0009612">
    <property type="term" value="P:response to mechanical stimulus"/>
    <property type="evidence" value="ECO:0000270"/>
    <property type="project" value="RGD"/>
</dbReference>
<dbReference type="FunFam" id="1.10.287.70:FF:000043">
    <property type="entry name" value="Potassium channel subfamily K member 10 isoform 2"/>
    <property type="match status" value="1"/>
</dbReference>
<dbReference type="Gene3D" id="1.10.287.70">
    <property type="match status" value="1"/>
</dbReference>
<dbReference type="InterPro" id="IPR003280">
    <property type="entry name" value="2pore_dom_K_chnl"/>
</dbReference>
<dbReference type="InterPro" id="IPR003976">
    <property type="entry name" value="2pore_dom_K_chnl_TREK"/>
</dbReference>
<dbReference type="InterPro" id="IPR013099">
    <property type="entry name" value="K_chnl_dom"/>
</dbReference>
<dbReference type="PANTHER" id="PTHR11003:SF21">
    <property type="entry name" value="POTASSIUM CHANNEL SUBFAMILY K MEMBER 2"/>
    <property type="match status" value="1"/>
</dbReference>
<dbReference type="PANTHER" id="PTHR11003">
    <property type="entry name" value="POTASSIUM CHANNEL, SUBFAMILY K"/>
    <property type="match status" value="1"/>
</dbReference>
<dbReference type="Pfam" id="PF07885">
    <property type="entry name" value="Ion_trans_2"/>
    <property type="match status" value="2"/>
</dbReference>
<dbReference type="PRINTS" id="PR01333">
    <property type="entry name" value="2POREKCHANEL"/>
</dbReference>
<dbReference type="PRINTS" id="PR01499">
    <property type="entry name" value="TREKCHANNEL"/>
</dbReference>
<dbReference type="SUPFAM" id="SSF81324">
    <property type="entry name" value="Voltage-gated potassium channels"/>
    <property type="match status" value="2"/>
</dbReference>